<name>RIMO_CUPMC</name>
<evidence type="ECO:0000255" key="1">
    <source>
        <dbReference type="HAMAP-Rule" id="MF_01865"/>
    </source>
</evidence>
<evidence type="ECO:0000255" key="2">
    <source>
        <dbReference type="PROSITE-ProRule" id="PRU01266"/>
    </source>
</evidence>
<organism>
    <name type="scientific">Cupriavidus metallidurans (strain ATCC 43123 / DSM 2839 / NBRC 102507 / CH34)</name>
    <name type="common">Ralstonia metallidurans</name>
    <dbReference type="NCBI Taxonomy" id="266264"/>
    <lineage>
        <taxon>Bacteria</taxon>
        <taxon>Pseudomonadati</taxon>
        <taxon>Pseudomonadota</taxon>
        <taxon>Betaproteobacteria</taxon>
        <taxon>Burkholderiales</taxon>
        <taxon>Burkholderiaceae</taxon>
        <taxon>Cupriavidus</taxon>
    </lineage>
</organism>
<comment type="function">
    <text evidence="1">Catalyzes the methylthiolation of an aspartic acid residue of ribosomal protein uS12.</text>
</comment>
<comment type="catalytic activity">
    <reaction evidence="1">
        <text>L-aspartate(89)-[ribosomal protein uS12]-hydrogen + (sulfur carrier)-SH + AH2 + 2 S-adenosyl-L-methionine = 3-methylsulfanyl-L-aspartate(89)-[ribosomal protein uS12]-hydrogen + (sulfur carrier)-H + 5'-deoxyadenosine + L-methionine + A + S-adenosyl-L-homocysteine + 2 H(+)</text>
        <dbReference type="Rhea" id="RHEA:37087"/>
        <dbReference type="Rhea" id="RHEA-COMP:10460"/>
        <dbReference type="Rhea" id="RHEA-COMP:10461"/>
        <dbReference type="Rhea" id="RHEA-COMP:14737"/>
        <dbReference type="Rhea" id="RHEA-COMP:14739"/>
        <dbReference type="ChEBI" id="CHEBI:13193"/>
        <dbReference type="ChEBI" id="CHEBI:15378"/>
        <dbReference type="ChEBI" id="CHEBI:17319"/>
        <dbReference type="ChEBI" id="CHEBI:17499"/>
        <dbReference type="ChEBI" id="CHEBI:29917"/>
        <dbReference type="ChEBI" id="CHEBI:29961"/>
        <dbReference type="ChEBI" id="CHEBI:57844"/>
        <dbReference type="ChEBI" id="CHEBI:57856"/>
        <dbReference type="ChEBI" id="CHEBI:59789"/>
        <dbReference type="ChEBI" id="CHEBI:64428"/>
        <dbReference type="ChEBI" id="CHEBI:73599"/>
        <dbReference type="EC" id="2.8.4.4"/>
    </reaction>
</comment>
<comment type="cofactor">
    <cofactor evidence="1">
        <name>[4Fe-4S] cluster</name>
        <dbReference type="ChEBI" id="CHEBI:49883"/>
    </cofactor>
    <text evidence="1">Binds 2 [4Fe-4S] clusters. One cluster is coordinated with 3 cysteines and an exchangeable S-adenosyl-L-methionine.</text>
</comment>
<comment type="subcellular location">
    <subcellularLocation>
        <location evidence="1">Cytoplasm</location>
    </subcellularLocation>
</comment>
<comment type="similarity">
    <text evidence="1">Belongs to the methylthiotransferase family. RimO subfamily.</text>
</comment>
<protein>
    <recommendedName>
        <fullName evidence="1">Ribosomal protein uS12 methylthiotransferase RimO</fullName>
        <shortName evidence="1">uS12 MTTase</shortName>
        <shortName evidence="1">uS12 methylthiotransferase</shortName>
        <ecNumber evidence="1">2.8.4.4</ecNumber>
    </recommendedName>
    <alternativeName>
        <fullName evidence="1">Ribosomal protein uS12 (aspartate-C(3))-methylthiotransferase</fullName>
    </alternativeName>
    <alternativeName>
        <fullName evidence="1">Ribosome maturation factor RimO</fullName>
    </alternativeName>
</protein>
<reference key="1">
    <citation type="journal article" date="2010" name="PLoS ONE">
        <title>The complete genome sequence of Cupriavidus metallidurans strain CH34, a master survivalist in harsh and anthropogenic environments.</title>
        <authorList>
            <person name="Janssen P.J."/>
            <person name="Van Houdt R."/>
            <person name="Moors H."/>
            <person name="Monsieurs P."/>
            <person name="Morin N."/>
            <person name="Michaux A."/>
            <person name="Benotmane M.A."/>
            <person name="Leys N."/>
            <person name="Vallaeys T."/>
            <person name="Lapidus A."/>
            <person name="Monchy S."/>
            <person name="Medigue C."/>
            <person name="Taghavi S."/>
            <person name="McCorkle S."/>
            <person name="Dunn J."/>
            <person name="van der Lelie D."/>
            <person name="Mergeay M."/>
        </authorList>
    </citation>
    <scope>NUCLEOTIDE SEQUENCE [LARGE SCALE GENOMIC DNA]</scope>
    <source>
        <strain>ATCC 43123 / DSM 2839 / NBRC 102507 / CH34</strain>
    </source>
</reference>
<sequence>MSSDTNLSNPPKVGFVSLGCPKALVDSEQIITQLRAEGYSISGTYDGADLVVVNTCGFIDEAVQESLDAIGEALTENGKVIVTGCLGAKKDAAGHDIVSAVHPKVLAVTGPHALGEVMQAVHTHLPKPHDPFTDLVPAAGIKLTPKHYAYLKISEGCNHRCSFCIIPSMRGDLVSRPVAEVMLEAENLFKAGVKELLVISQDTSAYGVDVKYRTGFWNGRPLKTRMTELVAALGELASQYGAWVRLHYVYPYPHVDEIIPLMNQGNVLPYLDVPLQHAHPDVLKRMKRPANAEKTLDRIRAWREVCPDLTIRSTFIAGFPGETEEEFQTLLDFIAEAELDRVGCFAYSPVEGATANDLPGALPDEVREERRARFMEVAEEVSARRLQRKVGQTLRVLVDEVNQDGGIGRSSADAPEIDGLVYIDPAAKASQRYKTGDFVNVKITGADGHDLWGEVA</sequence>
<keyword id="KW-0004">4Fe-4S</keyword>
<keyword id="KW-0963">Cytoplasm</keyword>
<keyword id="KW-0408">Iron</keyword>
<keyword id="KW-0411">Iron-sulfur</keyword>
<keyword id="KW-0479">Metal-binding</keyword>
<keyword id="KW-1185">Reference proteome</keyword>
<keyword id="KW-0949">S-adenosyl-L-methionine</keyword>
<keyword id="KW-0808">Transferase</keyword>
<proteinExistence type="inferred from homology"/>
<gene>
    <name evidence="1" type="primary">rimO</name>
    <name type="ordered locus">Rmet_1361</name>
</gene>
<dbReference type="EC" id="2.8.4.4" evidence="1"/>
<dbReference type="EMBL" id="CP000352">
    <property type="protein sequence ID" value="ABF08244.1"/>
    <property type="molecule type" value="Genomic_DNA"/>
</dbReference>
<dbReference type="RefSeq" id="WP_011516124.1">
    <property type="nucleotide sequence ID" value="NC_007973.1"/>
</dbReference>
<dbReference type="SMR" id="Q1LNN2"/>
<dbReference type="STRING" id="266264.Rmet_1361"/>
<dbReference type="KEGG" id="rme:Rmet_1361"/>
<dbReference type="eggNOG" id="COG0621">
    <property type="taxonomic scope" value="Bacteria"/>
</dbReference>
<dbReference type="HOGENOM" id="CLU_018697_0_0_4"/>
<dbReference type="Proteomes" id="UP000002429">
    <property type="component" value="Chromosome"/>
</dbReference>
<dbReference type="GO" id="GO:0005829">
    <property type="term" value="C:cytosol"/>
    <property type="evidence" value="ECO:0007669"/>
    <property type="project" value="TreeGrafter"/>
</dbReference>
<dbReference type="GO" id="GO:0051539">
    <property type="term" value="F:4 iron, 4 sulfur cluster binding"/>
    <property type="evidence" value="ECO:0007669"/>
    <property type="project" value="UniProtKB-UniRule"/>
</dbReference>
<dbReference type="GO" id="GO:0035599">
    <property type="term" value="F:aspartic acid methylthiotransferase activity"/>
    <property type="evidence" value="ECO:0007669"/>
    <property type="project" value="TreeGrafter"/>
</dbReference>
<dbReference type="GO" id="GO:0046872">
    <property type="term" value="F:metal ion binding"/>
    <property type="evidence" value="ECO:0007669"/>
    <property type="project" value="UniProtKB-KW"/>
</dbReference>
<dbReference type="GO" id="GO:0103039">
    <property type="term" value="F:protein methylthiotransferase activity"/>
    <property type="evidence" value="ECO:0007669"/>
    <property type="project" value="UniProtKB-EC"/>
</dbReference>
<dbReference type="GO" id="GO:0006400">
    <property type="term" value="P:tRNA modification"/>
    <property type="evidence" value="ECO:0007669"/>
    <property type="project" value="InterPro"/>
</dbReference>
<dbReference type="CDD" id="cd01335">
    <property type="entry name" value="Radical_SAM"/>
    <property type="match status" value="1"/>
</dbReference>
<dbReference type="FunFam" id="3.40.50.12160:FF:000002">
    <property type="entry name" value="Ribosomal protein S12 methylthiotransferase RimO"/>
    <property type="match status" value="1"/>
</dbReference>
<dbReference type="FunFam" id="3.80.30.20:FF:000001">
    <property type="entry name" value="tRNA-2-methylthio-N(6)-dimethylallyladenosine synthase 2"/>
    <property type="match status" value="1"/>
</dbReference>
<dbReference type="Gene3D" id="3.40.50.12160">
    <property type="entry name" value="Methylthiotransferase, N-terminal domain"/>
    <property type="match status" value="1"/>
</dbReference>
<dbReference type="Gene3D" id="2.40.50.140">
    <property type="entry name" value="Nucleic acid-binding proteins"/>
    <property type="match status" value="1"/>
</dbReference>
<dbReference type="Gene3D" id="3.80.30.20">
    <property type="entry name" value="tm_1862 like domain"/>
    <property type="match status" value="1"/>
</dbReference>
<dbReference type="HAMAP" id="MF_01865">
    <property type="entry name" value="MTTase_RimO"/>
    <property type="match status" value="1"/>
</dbReference>
<dbReference type="InterPro" id="IPR006638">
    <property type="entry name" value="Elp3/MiaA/NifB-like_rSAM"/>
</dbReference>
<dbReference type="InterPro" id="IPR005839">
    <property type="entry name" value="Methylthiotransferase"/>
</dbReference>
<dbReference type="InterPro" id="IPR020612">
    <property type="entry name" value="Methylthiotransferase_CS"/>
</dbReference>
<dbReference type="InterPro" id="IPR013848">
    <property type="entry name" value="Methylthiotransferase_N"/>
</dbReference>
<dbReference type="InterPro" id="IPR038135">
    <property type="entry name" value="Methylthiotransferase_N_sf"/>
</dbReference>
<dbReference type="InterPro" id="IPR012340">
    <property type="entry name" value="NA-bd_OB-fold"/>
</dbReference>
<dbReference type="InterPro" id="IPR005840">
    <property type="entry name" value="Ribosomal_uS12_MeSTrfase_RimO"/>
</dbReference>
<dbReference type="InterPro" id="IPR007197">
    <property type="entry name" value="rSAM"/>
</dbReference>
<dbReference type="InterPro" id="IPR023404">
    <property type="entry name" value="rSAM_horseshoe"/>
</dbReference>
<dbReference type="InterPro" id="IPR002792">
    <property type="entry name" value="TRAM_dom"/>
</dbReference>
<dbReference type="NCBIfam" id="TIGR01125">
    <property type="entry name" value="30S ribosomal protein S12 methylthiotransferase RimO"/>
    <property type="match status" value="1"/>
</dbReference>
<dbReference type="NCBIfam" id="TIGR00089">
    <property type="entry name" value="MiaB/RimO family radical SAM methylthiotransferase"/>
    <property type="match status" value="1"/>
</dbReference>
<dbReference type="PANTHER" id="PTHR43837">
    <property type="entry name" value="RIBOSOMAL PROTEIN S12 METHYLTHIOTRANSFERASE RIMO"/>
    <property type="match status" value="1"/>
</dbReference>
<dbReference type="PANTHER" id="PTHR43837:SF1">
    <property type="entry name" value="RIBOSOMAL PROTEIN US12 METHYLTHIOTRANSFERASE RIMO"/>
    <property type="match status" value="1"/>
</dbReference>
<dbReference type="Pfam" id="PF04055">
    <property type="entry name" value="Radical_SAM"/>
    <property type="match status" value="1"/>
</dbReference>
<dbReference type="Pfam" id="PF18693">
    <property type="entry name" value="TRAM_2"/>
    <property type="match status" value="1"/>
</dbReference>
<dbReference type="Pfam" id="PF00919">
    <property type="entry name" value="UPF0004"/>
    <property type="match status" value="1"/>
</dbReference>
<dbReference type="SFLD" id="SFLDG01082">
    <property type="entry name" value="B12-binding_domain_containing"/>
    <property type="match status" value="1"/>
</dbReference>
<dbReference type="SFLD" id="SFLDS00029">
    <property type="entry name" value="Radical_SAM"/>
    <property type="match status" value="1"/>
</dbReference>
<dbReference type="SFLD" id="SFLDF00274">
    <property type="entry name" value="ribosomal_protein_S12_methylth"/>
    <property type="match status" value="1"/>
</dbReference>
<dbReference type="SMART" id="SM00729">
    <property type="entry name" value="Elp3"/>
    <property type="match status" value="1"/>
</dbReference>
<dbReference type="SUPFAM" id="SSF102114">
    <property type="entry name" value="Radical SAM enzymes"/>
    <property type="match status" value="1"/>
</dbReference>
<dbReference type="PROSITE" id="PS51449">
    <property type="entry name" value="MTTASE_N"/>
    <property type="match status" value="1"/>
</dbReference>
<dbReference type="PROSITE" id="PS01278">
    <property type="entry name" value="MTTASE_RADICAL"/>
    <property type="match status" value="1"/>
</dbReference>
<dbReference type="PROSITE" id="PS51918">
    <property type="entry name" value="RADICAL_SAM"/>
    <property type="match status" value="1"/>
</dbReference>
<dbReference type="PROSITE" id="PS50926">
    <property type="entry name" value="TRAM"/>
    <property type="match status" value="1"/>
</dbReference>
<feature type="chain" id="PRO_0000374961" description="Ribosomal protein uS12 methylthiotransferase RimO">
    <location>
        <begin position="1"/>
        <end position="456"/>
    </location>
</feature>
<feature type="domain" description="MTTase N-terminal" evidence="1">
    <location>
        <begin position="11"/>
        <end position="126"/>
    </location>
</feature>
<feature type="domain" description="Radical SAM core" evidence="2">
    <location>
        <begin position="143"/>
        <end position="384"/>
    </location>
</feature>
<feature type="domain" description="TRAM" evidence="1">
    <location>
        <begin position="387"/>
        <end position="456"/>
    </location>
</feature>
<feature type="binding site" evidence="1">
    <location>
        <position position="20"/>
    </location>
    <ligand>
        <name>[4Fe-4S] cluster</name>
        <dbReference type="ChEBI" id="CHEBI:49883"/>
        <label>1</label>
    </ligand>
</feature>
<feature type="binding site" evidence="1">
    <location>
        <position position="56"/>
    </location>
    <ligand>
        <name>[4Fe-4S] cluster</name>
        <dbReference type="ChEBI" id="CHEBI:49883"/>
        <label>1</label>
    </ligand>
</feature>
<feature type="binding site" evidence="1">
    <location>
        <position position="85"/>
    </location>
    <ligand>
        <name>[4Fe-4S] cluster</name>
        <dbReference type="ChEBI" id="CHEBI:49883"/>
        <label>1</label>
    </ligand>
</feature>
<feature type="binding site" evidence="1">
    <location>
        <position position="157"/>
    </location>
    <ligand>
        <name>[4Fe-4S] cluster</name>
        <dbReference type="ChEBI" id="CHEBI:49883"/>
        <label>2</label>
        <note>4Fe-4S-S-AdoMet</note>
    </ligand>
</feature>
<feature type="binding site" evidence="1">
    <location>
        <position position="161"/>
    </location>
    <ligand>
        <name>[4Fe-4S] cluster</name>
        <dbReference type="ChEBI" id="CHEBI:49883"/>
        <label>2</label>
        <note>4Fe-4S-S-AdoMet</note>
    </ligand>
</feature>
<feature type="binding site" evidence="1">
    <location>
        <position position="164"/>
    </location>
    <ligand>
        <name>[4Fe-4S] cluster</name>
        <dbReference type="ChEBI" id="CHEBI:49883"/>
        <label>2</label>
        <note>4Fe-4S-S-AdoMet</note>
    </ligand>
</feature>
<accession>Q1LNN2</accession>